<accession>Q3BQ76</accession>
<reference key="1">
    <citation type="journal article" date="2005" name="J. Bacteriol.">
        <title>Insights into genome plasticity and pathogenicity of the plant pathogenic Bacterium Xanthomonas campestris pv. vesicatoria revealed by the complete genome sequence.</title>
        <authorList>
            <person name="Thieme F."/>
            <person name="Koebnik R."/>
            <person name="Bekel T."/>
            <person name="Berger C."/>
            <person name="Boch J."/>
            <person name="Buettner D."/>
            <person name="Caldana C."/>
            <person name="Gaigalat L."/>
            <person name="Goesmann A."/>
            <person name="Kay S."/>
            <person name="Kirchner O."/>
            <person name="Lanz C."/>
            <person name="Linke B."/>
            <person name="McHardy A.C."/>
            <person name="Meyer F."/>
            <person name="Mittenhuber G."/>
            <person name="Nies D.H."/>
            <person name="Niesbach-Kloesgen U."/>
            <person name="Patschkowski T."/>
            <person name="Rueckert C."/>
            <person name="Rupp O."/>
            <person name="Schneiker S."/>
            <person name="Schuster S.C."/>
            <person name="Vorhoelter F.J."/>
            <person name="Weber E."/>
            <person name="Puehler A."/>
            <person name="Bonas U."/>
            <person name="Bartels D."/>
            <person name="Kaiser O."/>
        </authorList>
    </citation>
    <scope>NUCLEOTIDE SEQUENCE [LARGE SCALE GENOMIC DNA]</scope>
    <source>
        <strain>85-10</strain>
    </source>
</reference>
<protein>
    <recommendedName>
        <fullName evidence="1">Dephospho-CoA kinase</fullName>
        <ecNumber evidence="1">2.7.1.24</ecNumber>
    </recommendedName>
    <alternativeName>
        <fullName evidence="1">Dephosphocoenzyme A kinase</fullName>
    </alternativeName>
</protein>
<proteinExistence type="inferred from homology"/>
<comment type="function">
    <text evidence="1">Catalyzes the phosphorylation of the 3'-hydroxyl group of dephosphocoenzyme A to form coenzyme A.</text>
</comment>
<comment type="catalytic activity">
    <reaction evidence="1">
        <text>3'-dephospho-CoA + ATP = ADP + CoA + H(+)</text>
        <dbReference type="Rhea" id="RHEA:18245"/>
        <dbReference type="ChEBI" id="CHEBI:15378"/>
        <dbReference type="ChEBI" id="CHEBI:30616"/>
        <dbReference type="ChEBI" id="CHEBI:57287"/>
        <dbReference type="ChEBI" id="CHEBI:57328"/>
        <dbReference type="ChEBI" id="CHEBI:456216"/>
        <dbReference type="EC" id="2.7.1.24"/>
    </reaction>
</comment>
<comment type="pathway">
    <text evidence="1">Cofactor biosynthesis; coenzyme A biosynthesis; CoA from (R)-pantothenate: step 5/5.</text>
</comment>
<comment type="subcellular location">
    <subcellularLocation>
        <location evidence="1">Cytoplasm</location>
    </subcellularLocation>
</comment>
<comment type="similarity">
    <text evidence="1">Belongs to the CoaE family.</text>
</comment>
<organism>
    <name type="scientific">Xanthomonas euvesicatoria pv. vesicatoria (strain 85-10)</name>
    <name type="common">Xanthomonas campestris pv. vesicatoria</name>
    <dbReference type="NCBI Taxonomy" id="316273"/>
    <lineage>
        <taxon>Bacteria</taxon>
        <taxon>Pseudomonadati</taxon>
        <taxon>Pseudomonadota</taxon>
        <taxon>Gammaproteobacteria</taxon>
        <taxon>Lysobacterales</taxon>
        <taxon>Lysobacteraceae</taxon>
        <taxon>Xanthomonas</taxon>
    </lineage>
</organism>
<gene>
    <name evidence="1" type="primary">coaE</name>
    <name type="ordered locus">XCV3356</name>
</gene>
<name>COAE_XANE5</name>
<keyword id="KW-0067">ATP-binding</keyword>
<keyword id="KW-0173">Coenzyme A biosynthesis</keyword>
<keyword id="KW-0963">Cytoplasm</keyword>
<keyword id="KW-0418">Kinase</keyword>
<keyword id="KW-0547">Nucleotide-binding</keyword>
<keyword id="KW-0808">Transferase</keyword>
<evidence type="ECO:0000255" key="1">
    <source>
        <dbReference type="HAMAP-Rule" id="MF_00376"/>
    </source>
</evidence>
<feature type="chain" id="PRO_0000243365" description="Dephospho-CoA kinase">
    <location>
        <begin position="1"/>
        <end position="203"/>
    </location>
</feature>
<feature type="domain" description="DPCK" evidence="1">
    <location>
        <begin position="5"/>
        <end position="203"/>
    </location>
</feature>
<feature type="binding site" evidence="1">
    <location>
        <begin position="13"/>
        <end position="18"/>
    </location>
    <ligand>
        <name>ATP</name>
        <dbReference type="ChEBI" id="CHEBI:30616"/>
    </ligand>
</feature>
<sequence length="203" mass="22029">MSDFIVGLTGGIASGKSALAAEFEKLGIPVIDADVVARQVVEPGPILDAIAHRFGRAILLPDGMLDRQALRQIVFADPVQRKALEAITHPAIRAELRRAALAARGPYAIVAIPLLAEAGGRATYPWLDRILVVDIPAALQHARLMRRDGATPELANRMIAAQATRDQREAIADDIVSNDRTPEQLEQEARRLDVVYRVAASEH</sequence>
<dbReference type="EC" id="2.7.1.24" evidence="1"/>
<dbReference type="EMBL" id="AM039952">
    <property type="protein sequence ID" value="CAJ25087.1"/>
    <property type="molecule type" value="Genomic_DNA"/>
</dbReference>
<dbReference type="RefSeq" id="WP_011348341.1">
    <property type="nucleotide sequence ID" value="NZ_CP017190.1"/>
</dbReference>
<dbReference type="SMR" id="Q3BQ76"/>
<dbReference type="STRING" id="456327.BJD11_05985"/>
<dbReference type="KEGG" id="xcv:XCV3356"/>
<dbReference type="eggNOG" id="COG0237">
    <property type="taxonomic scope" value="Bacteria"/>
</dbReference>
<dbReference type="HOGENOM" id="CLU_057180_1_2_6"/>
<dbReference type="UniPathway" id="UPA00241">
    <property type="reaction ID" value="UER00356"/>
</dbReference>
<dbReference type="Proteomes" id="UP000007069">
    <property type="component" value="Chromosome"/>
</dbReference>
<dbReference type="GO" id="GO:0005737">
    <property type="term" value="C:cytoplasm"/>
    <property type="evidence" value="ECO:0007669"/>
    <property type="project" value="UniProtKB-SubCell"/>
</dbReference>
<dbReference type="GO" id="GO:0005524">
    <property type="term" value="F:ATP binding"/>
    <property type="evidence" value="ECO:0007669"/>
    <property type="project" value="UniProtKB-UniRule"/>
</dbReference>
<dbReference type="GO" id="GO:0004140">
    <property type="term" value="F:dephospho-CoA kinase activity"/>
    <property type="evidence" value="ECO:0007669"/>
    <property type="project" value="UniProtKB-UniRule"/>
</dbReference>
<dbReference type="GO" id="GO:0015937">
    <property type="term" value="P:coenzyme A biosynthetic process"/>
    <property type="evidence" value="ECO:0007669"/>
    <property type="project" value="UniProtKB-UniRule"/>
</dbReference>
<dbReference type="CDD" id="cd02022">
    <property type="entry name" value="DPCK"/>
    <property type="match status" value="1"/>
</dbReference>
<dbReference type="Gene3D" id="3.40.50.300">
    <property type="entry name" value="P-loop containing nucleotide triphosphate hydrolases"/>
    <property type="match status" value="1"/>
</dbReference>
<dbReference type="HAMAP" id="MF_00376">
    <property type="entry name" value="Dephospho_CoA_kinase"/>
    <property type="match status" value="1"/>
</dbReference>
<dbReference type="InterPro" id="IPR001977">
    <property type="entry name" value="Depp_CoAkinase"/>
</dbReference>
<dbReference type="InterPro" id="IPR027417">
    <property type="entry name" value="P-loop_NTPase"/>
</dbReference>
<dbReference type="NCBIfam" id="TIGR00152">
    <property type="entry name" value="dephospho-CoA kinase"/>
    <property type="match status" value="1"/>
</dbReference>
<dbReference type="PANTHER" id="PTHR10695:SF46">
    <property type="entry name" value="BIFUNCTIONAL COENZYME A SYNTHASE-RELATED"/>
    <property type="match status" value="1"/>
</dbReference>
<dbReference type="PANTHER" id="PTHR10695">
    <property type="entry name" value="DEPHOSPHO-COA KINASE-RELATED"/>
    <property type="match status" value="1"/>
</dbReference>
<dbReference type="Pfam" id="PF01121">
    <property type="entry name" value="CoaE"/>
    <property type="match status" value="1"/>
</dbReference>
<dbReference type="SUPFAM" id="SSF52540">
    <property type="entry name" value="P-loop containing nucleoside triphosphate hydrolases"/>
    <property type="match status" value="1"/>
</dbReference>
<dbReference type="PROSITE" id="PS51219">
    <property type="entry name" value="DPCK"/>
    <property type="match status" value="1"/>
</dbReference>